<feature type="initiator methionine" description="Removed" evidence="4">
    <location>
        <position position="1"/>
    </location>
</feature>
<feature type="chain" id="PRO_0000057549" description="Beta-crystallin B1">
    <location>
        <begin position="2"/>
        <end position="253"/>
    </location>
</feature>
<feature type="domain" description="Beta/gamma crystallin 'Greek key' 1" evidence="2">
    <location>
        <begin position="60"/>
        <end position="99"/>
    </location>
</feature>
<feature type="domain" description="Beta/gamma crystallin 'Greek key' 2" evidence="2">
    <location>
        <begin position="100"/>
        <end position="144"/>
    </location>
</feature>
<feature type="domain" description="Beta/gamma crystallin 'Greek key' 3" evidence="2">
    <location>
        <begin position="150"/>
        <end position="191"/>
    </location>
</feature>
<feature type="domain" description="Beta/gamma crystallin 'Greek key' 4" evidence="2">
    <location>
        <begin position="192"/>
        <end position="234"/>
    </location>
</feature>
<feature type="region of interest" description="Disordered" evidence="3">
    <location>
        <begin position="1"/>
        <end position="53"/>
    </location>
</feature>
<feature type="region of interest" description="N-terminal arm">
    <location>
        <begin position="2"/>
        <end position="59"/>
    </location>
</feature>
<feature type="region of interest" description="Connecting peptide">
    <location>
        <begin position="145"/>
        <end position="149"/>
    </location>
</feature>
<feature type="region of interest" description="C-terminal arm">
    <location>
        <begin position="236"/>
        <end position="253"/>
    </location>
</feature>
<feature type="compositionally biased region" description="Low complexity" evidence="3">
    <location>
        <begin position="1"/>
        <end position="18"/>
    </location>
</feature>
<feature type="compositionally biased region" description="Pro residues" evidence="3">
    <location>
        <begin position="25"/>
        <end position="47"/>
    </location>
</feature>
<feature type="modified residue" description="N-acetylserine" evidence="1 5">
    <location>
        <position position="2"/>
    </location>
</feature>
<feature type="sequence conflict" description="In Ref. 2; AA sequence." evidence="5" ref="2">
    <original>ASAT</original>
    <variation>TSAA</variation>
    <location>
        <begin position="8"/>
        <end position="11"/>
    </location>
</feature>
<feature type="sequence conflict" description="In Ref. 2; AA sequence." evidence="5" ref="2">
    <location>
        <position position="51"/>
    </location>
</feature>
<feature type="sequence conflict" description="In Ref. 2; AA sequence." evidence="5" ref="2">
    <location>
        <begin position="94"/>
        <end position="102"/>
    </location>
</feature>
<feature type="sequence conflict" description="In Ref. 2; AA sequence." evidence="5" ref="2">
    <original>A</original>
    <variation>S</variation>
    <location>
        <position position="147"/>
    </location>
</feature>
<protein>
    <recommendedName>
        <fullName>Beta-crystallin B1</fullName>
    </recommendedName>
    <alternativeName>
        <fullName>Beta-B1 crystallin</fullName>
    </alternativeName>
</protein>
<evidence type="ECO:0000250" key="1">
    <source>
        <dbReference type="UniProtKB" id="P53674"/>
    </source>
</evidence>
<evidence type="ECO:0000255" key="2">
    <source>
        <dbReference type="PROSITE-ProRule" id="PRU00028"/>
    </source>
</evidence>
<evidence type="ECO:0000256" key="3">
    <source>
        <dbReference type="SAM" id="MobiDB-lite"/>
    </source>
</evidence>
<evidence type="ECO:0000269" key="4">
    <source>
    </source>
</evidence>
<evidence type="ECO:0000305" key="5"/>
<comment type="function">
    <text>Crystallins are the dominant structural components of the vertebrate eye lens.</text>
</comment>
<comment type="subunit">
    <text>Homo/heterodimer, or complexes of higher-order. The structure of beta-crystallin oligomers seems to be stabilized through interactions between the N-terminal arms.</text>
</comment>
<comment type="domain">
    <text>Has a two-domain beta-structure, folded into four very similar Greek key motifs.</text>
</comment>
<comment type="PTM">
    <text>Specific cleavages in the N-terminal arm occur during lens maturation and give rise to truncated forms, leading to impaired oligomerization and protein insolubilization.</text>
</comment>
<comment type="similarity">
    <text evidence="5">Belongs to the beta/gamma-crystallin family.</text>
</comment>
<gene>
    <name type="primary">CRYBB1</name>
</gene>
<proteinExistence type="evidence at protein level"/>
<name>CRBB1_BOVIN</name>
<sequence length="253" mass="28144">MSQPAAKASATAAVNPGPDGKGKAGPPPGPAPGSGPAPAPAPAPAQPAPAAKAELPPGSYKLVVFEQENFQGRRVEFSGECLNLGDRGFERVRSIIVTSGPWVAFEQSNFRGEMFVLEKGEYPRWDTWSSSYRSDRLMSFRPIKMDAQEHKLCLFEGANFKGNTMEIQEDDVPSLWVYGFCDRVGSVRVSSGTWVGYQYPGYRGYQYLLEPGDFRHWNEWGAFQPQMQAVRRLRDRQWHREGCFPVLAAEPPK</sequence>
<accession>P07318</accession>
<reference key="1">
    <citation type="journal article" date="1984" name="J. Mol. Biol.">
        <title>Bovine beta-crystallin complementary DNA clones. Alternating proline/alanine sequence of beta B1 subunit originates from a repetitive DNA sequence.</title>
        <authorList>
            <person name="Quax-Jeuken Y."/>
            <person name="Janssen C."/>
            <person name="Quax W.J."/>
            <person name="van den Heuvel R."/>
            <person name="Bloemendal H."/>
        </authorList>
    </citation>
    <scope>NUCLEOTIDE SEQUENCE [MRNA]</scope>
</reference>
<reference key="2">
    <citation type="journal article" date="1984" name="Eur. J. Biochem.">
        <title>Homology between the primary structures of the major bovine beta-crystallin chains.</title>
        <authorList>
            <person name="Berbers G.A.M."/>
            <person name="Hoekman W.A."/>
            <person name="Bloemendal H."/>
            <person name="de Jong W.W."/>
            <person name="Kleinschmidt T."/>
            <person name="Braunitzer G."/>
        </authorList>
    </citation>
    <scope>PROTEIN SEQUENCE OF 2-253</scope>
    <source>
        <tissue>Lens cortex</tissue>
    </source>
</reference>
<dbReference type="EMBL" id="X01808">
    <property type="protein sequence ID" value="CAA25951.1"/>
    <property type="molecule type" value="mRNA"/>
</dbReference>
<dbReference type="PIR" id="S07264">
    <property type="entry name" value="S07264"/>
</dbReference>
<dbReference type="RefSeq" id="NP_776951.1">
    <property type="nucleotide sequence ID" value="NM_174526.2"/>
</dbReference>
<dbReference type="RefSeq" id="XP_024832787.1">
    <property type="nucleotide sequence ID" value="XM_024977019.2"/>
</dbReference>
<dbReference type="SMR" id="P07318"/>
<dbReference type="BioGRID" id="159479">
    <property type="interactions" value="1"/>
</dbReference>
<dbReference type="FunCoup" id="P07318">
    <property type="interactions" value="20"/>
</dbReference>
<dbReference type="STRING" id="9913.ENSBTAP00000069768"/>
<dbReference type="PaxDb" id="9913-ENSBTAP00000025671"/>
<dbReference type="Ensembl" id="ENSBTAT00000025671.7">
    <property type="protein sequence ID" value="ENSBTAP00000025671.5"/>
    <property type="gene ID" value="ENSBTAG00000019280.7"/>
</dbReference>
<dbReference type="GeneID" id="282205"/>
<dbReference type="KEGG" id="bta:282205"/>
<dbReference type="CTD" id="1414"/>
<dbReference type="VEuPathDB" id="HostDB:ENSBTAG00000019280"/>
<dbReference type="VGNC" id="VGNC:27736">
    <property type="gene designation" value="CRYBB1"/>
</dbReference>
<dbReference type="eggNOG" id="ENOG502QTJT">
    <property type="taxonomic scope" value="Eukaryota"/>
</dbReference>
<dbReference type="GeneTree" id="ENSGT00940000160516"/>
<dbReference type="InParanoid" id="P07318"/>
<dbReference type="OrthoDB" id="5411518at2759"/>
<dbReference type="TreeFam" id="TF331401"/>
<dbReference type="Proteomes" id="UP000009136">
    <property type="component" value="Chromosome 17"/>
</dbReference>
<dbReference type="Bgee" id="ENSBTAG00000019280">
    <property type="expression patterns" value="Expressed in anterior segment of eyeball and 100 other cell types or tissues"/>
</dbReference>
<dbReference type="GO" id="GO:0005212">
    <property type="term" value="F:structural constituent of eye lens"/>
    <property type="evidence" value="ECO:0000318"/>
    <property type="project" value="GO_Central"/>
</dbReference>
<dbReference type="GO" id="GO:0002088">
    <property type="term" value="P:lens development in camera-type eye"/>
    <property type="evidence" value="ECO:0000318"/>
    <property type="project" value="GO_Central"/>
</dbReference>
<dbReference type="GO" id="GO:0007601">
    <property type="term" value="P:visual perception"/>
    <property type="evidence" value="ECO:0000318"/>
    <property type="project" value="GO_Central"/>
</dbReference>
<dbReference type="FunFam" id="2.60.20.10:FF:000005">
    <property type="entry name" value="Crystallin, beta B1"/>
    <property type="match status" value="1"/>
</dbReference>
<dbReference type="FunFam" id="2.60.20.10:FF:000002">
    <property type="entry name" value="Crystallin, beta B2"/>
    <property type="match status" value="1"/>
</dbReference>
<dbReference type="Gene3D" id="2.60.20.10">
    <property type="entry name" value="Crystallins"/>
    <property type="match status" value="2"/>
</dbReference>
<dbReference type="InterPro" id="IPR050252">
    <property type="entry name" value="Beta/Gamma-Crystallin"/>
</dbReference>
<dbReference type="InterPro" id="IPR001064">
    <property type="entry name" value="Beta/gamma_crystallin"/>
</dbReference>
<dbReference type="InterPro" id="IPR011024">
    <property type="entry name" value="G_crystallin-like"/>
</dbReference>
<dbReference type="PANTHER" id="PTHR11818:SF12">
    <property type="entry name" value="BETA-CRYSTALLIN B1"/>
    <property type="match status" value="1"/>
</dbReference>
<dbReference type="PANTHER" id="PTHR11818">
    <property type="entry name" value="BETA/GAMMA CRYSTALLIN"/>
    <property type="match status" value="1"/>
</dbReference>
<dbReference type="Pfam" id="PF00030">
    <property type="entry name" value="Crystall"/>
    <property type="match status" value="2"/>
</dbReference>
<dbReference type="PRINTS" id="PR01367">
    <property type="entry name" value="BGCRYSTALLIN"/>
</dbReference>
<dbReference type="SMART" id="SM00247">
    <property type="entry name" value="XTALbg"/>
    <property type="match status" value="2"/>
</dbReference>
<dbReference type="SUPFAM" id="SSF49695">
    <property type="entry name" value="gamma-Crystallin-like"/>
    <property type="match status" value="1"/>
</dbReference>
<dbReference type="PROSITE" id="PS50915">
    <property type="entry name" value="CRYSTALLIN_BETA_GAMMA"/>
    <property type="match status" value="4"/>
</dbReference>
<keyword id="KW-0007">Acetylation</keyword>
<keyword id="KW-0903">Direct protein sequencing</keyword>
<keyword id="KW-0273">Eye lens protein</keyword>
<keyword id="KW-0488">Methylation</keyword>
<keyword id="KW-1185">Reference proteome</keyword>
<keyword id="KW-0677">Repeat</keyword>
<organism>
    <name type="scientific">Bos taurus</name>
    <name type="common">Bovine</name>
    <dbReference type="NCBI Taxonomy" id="9913"/>
    <lineage>
        <taxon>Eukaryota</taxon>
        <taxon>Metazoa</taxon>
        <taxon>Chordata</taxon>
        <taxon>Craniata</taxon>
        <taxon>Vertebrata</taxon>
        <taxon>Euteleostomi</taxon>
        <taxon>Mammalia</taxon>
        <taxon>Eutheria</taxon>
        <taxon>Laurasiatheria</taxon>
        <taxon>Artiodactyla</taxon>
        <taxon>Ruminantia</taxon>
        <taxon>Pecora</taxon>
        <taxon>Bovidae</taxon>
        <taxon>Bovinae</taxon>
        <taxon>Bos</taxon>
    </lineage>
</organism>